<name>RL9_BACAN</name>
<organism>
    <name type="scientific">Bacillus anthracis</name>
    <dbReference type="NCBI Taxonomy" id="1392"/>
    <lineage>
        <taxon>Bacteria</taxon>
        <taxon>Bacillati</taxon>
        <taxon>Bacillota</taxon>
        <taxon>Bacilli</taxon>
        <taxon>Bacillales</taxon>
        <taxon>Bacillaceae</taxon>
        <taxon>Bacillus</taxon>
        <taxon>Bacillus cereus group</taxon>
    </lineage>
</organism>
<gene>
    <name evidence="1" type="primary">rplI</name>
    <name type="ordered locus">BA_5718</name>
    <name type="ordered locus">GBAA_5718</name>
    <name type="ordered locus">BAS5322</name>
</gene>
<accession>Q81JI7</accession>
<accession>Q6HQ29</accession>
<accession>Q6KJH3</accession>
<keyword id="KW-1185">Reference proteome</keyword>
<keyword id="KW-0687">Ribonucleoprotein</keyword>
<keyword id="KW-0689">Ribosomal protein</keyword>
<keyword id="KW-0694">RNA-binding</keyword>
<keyword id="KW-0699">rRNA-binding</keyword>
<feature type="chain" id="PRO_0000236473" description="Large ribosomal subunit protein bL9">
    <location>
        <begin position="1"/>
        <end position="148"/>
    </location>
</feature>
<reference key="1">
    <citation type="journal article" date="2003" name="Nature">
        <title>The genome sequence of Bacillus anthracis Ames and comparison to closely related bacteria.</title>
        <authorList>
            <person name="Read T.D."/>
            <person name="Peterson S.N."/>
            <person name="Tourasse N.J."/>
            <person name="Baillie L.W."/>
            <person name="Paulsen I.T."/>
            <person name="Nelson K.E."/>
            <person name="Tettelin H."/>
            <person name="Fouts D.E."/>
            <person name="Eisen J.A."/>
            <person name="Gill S.R."/>
            <person name="Holtzapple E.K."/>
            <person name="Okstad O.A."/>
            <person name="Helgason E."/>
            <person name="Rilstone J."/>
            <person name="Wu M."/>
            <person name="Kolonay J.F."/>
            <person name="Beanan M.J."/>
            <person name="Dodson R.J."/>
            <person name="Brinkac L.M."/>
            <person name="Gwinn M.L."/>
            <person name="DeBoy R.T."/>
            <person name="Madpu R."/>
            <person name="Daugherty S.C."/>
            <person name="Durkin A.S."/>
            <person name="Haft D.H."/>
            <person name="Nelson W.C."/>
            <person name="Peterson J.D."/>
            <person name="Pop M."/>
            <person name="Khouri H.M."/>
            <person name="Radune D."/>
            <person name="Benton J.L."/>
            <person name="Mahamoud Y."/>
            <person name="Jiang L."/>
            <person name="Hance I.R."/>
            <person name="Weidman J.F."/>
            <person name="Berry K.J."/>
            <person name="Plaut R.D."/>
            <person name="Wolf A.M."/>
            <person name="Watkins K.L."/>
            <person name="Nierman W.C."/>
            <person name="Hazen A."/>
            <person name="Cline R.T."/>
            <person name="Redmond C."/>
            <person name="Thwaite J.E."/>
            <person name="White O."/>
            <person name="Salzberg S.L."/>
            <person name="Thomason B."/>
            <person name="Friedlander A.M."/>
            <person name="Koehler T.M."/>
            <person name="Hanna P.C."/>
            <person name="Kolstoe A.-B."/>
            <person name="Fraser C.M."/>
        </authorList>
    </citation>
    <scope>NUCLEOTIDE SEQUENCE [LARGE SCALE GENOMIC DNA]</scope>
    <source>
        <strain>Ames / isolate Porton</strain>
    </source>
</reference>
<reference key="2">
    <citation type="journal article" date="2009" name="J. Bacteriol.">
        <title>The complete genome sequence of Bacillus anthracis Ames 'Ancestor'.</title>
        <authorList>
            <person name="Ravel J."/>
            <person name="Jiang L."/>
            <person name="Stanley S.T."/>
            <person name="Wilson M.R."/>
            <person name="Decker R.S."/>
            <person name="Read T.D."/>
            <person name="Worsham P."/>
            <person name="Keim P.S."/>
            <person name="Salzberg S.L."/>
            <person name="Fraser-Liggett C.M."/>
            <person name="Rasko D.A."/>
        </authorList>
    </citation>
    <scope>NUCLEOTIDE SEQUENCE [LARGE SCALE GENOMIC DNA]</scope>
    <source>
        <strain>Ames ancestor</strain>
    </source>
</reference>
<reference key="3">
    <citation type="submission" date="2004-01" db="EMBL/GenBank/DDBJ databases">
        <title>Complete genome sequence of Bacillus anthracis Sterne.</title>
        <authorList>
            <person name="Brettin T.S."/>
            <person name="Bruce D."/>
            <person name="Challacombe J.F."/>
            <person name="Gilna P."/>
            <person name="Han C."/>
            <person name="Hill K."/>
            <person name="Hitchcock P."/>
            <person name="Jackson P."/>
            <person name="Keim P."/>
            <person name="Longmire J."/>
            <person name="Lucas S."/>
            <person name="Okinaka R."/>
            <person name="Richardson P."/>
            <person name="Rubin E."/>
            <person name="Tice H."/>
        </authorList>
    </citation>
    <scope>NUCLEOTIDE SEQUENCE [LARGE SCALE GENOMIC DNA]</scope>
    <source>
        <strain>Sterne</strain>
    </source>
</reference>
<sequence length="148" mass="16356">MKVIFLKDVKGKGKKGEVKNVPDGYANNFLLKQGLAAEATNSSMKTLEAQKRKEEKDAAAELESAKQLKETLEKLTVELKAKSGEGGRLFGSITSKQIVDAMQKSHKIKLDKRKFEMDDAIRALGYTNVTVKLHPQVTATVKVHVSEQ</sequence>
<proteinExistence type="inferred from homology"/>
<dbReference type="EMBL" id="AE016879">
    <property type="protein sequence ID" value="AAP29350.1"/>
    <property type="molecule type" value="Genomic_DNA"/>
</dbReference>
<dbReference type="EMBL" id="AE017334">
    <property type="protein sequence ID" value="AAT34879.1"/>
    <property type="molecule type" value="Genomic_DNA"/>
</dbReference>
<dbReference type="EMBL" id="AE017225">
    <property type="protein sequence ID" value="AAT57609.1"/>
    <property type="molecule type" value="Genomic_DNA"/>
</dbReference>
<dbReference type="RefSeq" id="NP_847864.1">
    <property type="nucleotide sequence ID" value="NC_003997.3"/>
</dbReference>
<dbReference type="RefSeq" id="WP_000864235.1">
    <property type="nucleotide sequence ID" value="NZ_WXXJ01000028.1"/>
</dbReference>
<dbReference type="RefSeq" id="YP_031559.1">
    <property type="nucleotide sequence ID" value="NC_005945.1"/>
</dbReference>
<dbReference type="SMR" id="Q81JI7"/>
<dbReference type="STRING" id="261594.GBAA_5718"/>
<dbReference type="DNASU" id="1085485"/>
<dbReference type="GeneID" id="83639160"/>
<dbReference type="KEGG" id="ban:BA_5718"/>
<dbReference type="KEGG" id="bar:GBAA_5718"/>
<dbReference type="KEGG" id="bat:BAS5322"/>
<dbReference type="PATRIC" id="fig|198094.11.peg.5680"/>
<dbReference type="eggNOG" id="COG0359">
    <property type="taxonomic scope" value="Bacteria"/>
</dbReference>
<dbReference type="HOGENOM" id="CLU_078938_3_2_9"/>
<dbReference type="OMA" id="FAIRWTK"/>
<dbReference type="OrthoDB" id="9788336at2"/>
<dbReference type="Proteomes" id="UP000000427">
    <property type="component" value="Chromosome"/>
</dbReference>
<dbReference type="Proteomes" id="UP000000594">
    <property type="component" value="Chromosome"/>
</dbReference>
<dbReference type="GO" id="GO:1990904">
    <property type="term" value="C:ribonucleoprotein complex"/>
    <property type="evidence" value="ECO:0007669"/>
    <property type="project" value="UniProtKB-KW"/>
</dbReference>
<dbReference type="GO" id="GO:0005840">
    <property type="term" value="C:ribosome"/>
    <property type="evidence" value="ECO:0007669"/>
    <property type="project" value="UniProtKB-KW"/>
</dbReference>
<dbReference type="GO" id="GO:0019843">
    <property type="term" value="F:rRNA binding"/>
    <property type="evidence" value="ECO:0007669"/>
    <property type="project" value="UniProtKB-UniRule"/>
</dbReference>
<dbReference type="GO" id="GO:0003735">
    <property type="term" value="F:structural constituent of ribosome"/>
    <property type="evidence" value="ECO:0007669"/>
    <property type="project" value="InterPro"/>
</dbReference>
<dbReference type="GO" id="GO:0006412">
    <property type="term" value="P:translation"/>
    <property type="evidence" value="ECO:0007669"/>
    <property type="project" value="UniProtKB-UniRule"/>
</dbReference>
<dbReference type="FunFam" id="3.10.430.100:FF:000002">
    <property type="entry name" value="50S ribosomal protein L9"/>
    <property type="match status" value="1"/>
</dbReference>
<dbReference type="FunFam" id="3.40.5.10:FF:000002">
    <property type="entry name" value="50S ribosomal protein L9"/>
    <property type="match status" value="1"/>
</dbReference>
<dbReference type="Gene3D" id="3.10.430.100">
    <property type="entry name" value="Ribosomal protein L9, C-terminal domain"/>
    <property type="match status" value="1"/>
</dbReference>
<dbReference type="Gene3D" id="3.40.5.10">
    <property type="entry name" value="Ribosomal protein L9, N-terminal domain"/>
    <property type="match status" value="1"/>
</dbReference>
<dbReference type="HAMAP" id="MF_00503">
    <property type="entry name" value="Ribosomal_bL9"/>
    <property type="match status" value="1"/>
</dbReference>
<dbReference type="InterPro" id="IPR000244">
    <property type="entry name" value="Ribosomal_bL9"/>
</dbReference>
<dbReference type="InterPro" id="IPR009027">
    <property type="entry name" value="Ribosomal_bL9/RNase_H1_N"/>
</dbReference>
<dbReference type="InterPro" id="IPR020594">
    <property type="entry name" value="Ribosomal_bL9_bac/chp"/>
</dbReference>
<dbReference type="InterPro" id="IPR020069">
    <property type="entry name" value="Ribosomal_bL9_C"/>
</dbReference>
<dbReference type="InterPro" id="IPR036791">
    <property type="entry name" value="Ribosomal_bL9_C_sf"/>
</dbReference>
<dbReference type="InterPro" id="IPR020070">
    <property type="entry name" value="Ribosomal_bL9_N"/>
</dbReference>
<dbReference type="InterPro" id="IPR036935">
    <property type="entry name" value="Ribosomal_bL9_N_sf"/>
</dbReference>
<dbReference type="NCBIfam" id="TIGR00158">
    <property type="entry name" value="L9"/>
    <property type="match status" value="1"/>
</dbReference>
<dbReference type="PANTHER" id="PTHR21368">
    <property type="entry name" value="50S RIBOSOMAL PROTEIN L9"/>
    <property type="match status" value="1"/>
</dbReference>
<dbReference type="Pfam" id="PF03948">
    <property type="entry name" value="Ribosomal_L9_C"/>
    <property type="match status" value="1"/>
</dbReference>
<dbReference type="Pfam" id="PF01281">
    <property type="entry name" value="Ribosomal_L9_N"/>
    <property type="match status" value="1"/>
</dbReference>
<dbReference type="SUPFAM" id="SSF55658">
    <property type="entry name" value="L9 N-domain-like"/>
    <property type="match status" value="1"/>
</dbReference>
<dbReference type="SUPFAM" id="SSF55653">
    <property type="entry name" value="Ribosomal protein L9 C-domain"/>
    <property type="match status" value="1"/>
</dbReference>
<dbReference type="PROSITE" id="PS00651">
    <property type="entry name" value="RIBOSOMAL_L9"/>
    <property type="match status" value="1"/>
</dbReference>
<evidence type="ECO:0000255" key="1">
    <source>
        <dbReference type="HAMAP-Rule" id="MF_00503"/>
    </source>
</evidence>
<evidence type="ECO:0000305" key="2"/>
<protein>
    <recommendedName>
        <fullName evidence="1">Large ribosomal subunit protein bL9</fullName>
    </recommendedName>
    <alternativeName>
        <fullName evidence="2">50S ribosomal protein L9</fullName>
    </alternativeName>
</protein>
<comment type="function">
    <text evidence="1">Binds to the 23S rRNA.</text>
</comment>
<comment type="similarity">
    <text evidence="1">Belongs to the bacterial ribosomal protein bL9 family.</text>
</comment>